<comment type="function">
    <text evidence="1">Cleaves a variety of carotenoids at the 9-10 and 9'-10' double bonds. Probably not involved in abscisic acid biosynthesis (By similarity).</text>
</comment>
<comment type="catalytic activity">
    <reaction>
        <text>all-trans-zeaxanthin + 2 O2 = 4,9-dimethyldodeca-2,4,6,8,10-pentaenedial + 2 (3R)-hydroxy-beta-ionone</text>
        <dbReference type="Rhea" id="RHEA:26393"/>
        <dbReference type="ChEBI" id="CHEBI:15379"/>
        <dbReference type="ChEBI" id="CHEBI:27547"/>
        <dbReference type="ChEBI" id="CHEBI:53171"/>
        <dbReference type="ChEBI" id="CHEBI:53173"/>
        <dbReference type="EC" id="1.14.99.n4"/>
    </reaction>
</comment>
<comment type="cofactor">
    <cofactor evidence="1">
        <name>Fe(2+)</name>
        <dbReference type="ChEBI" id="CHEBI:29033"/>
    </cofactor>
    <text evidence="1">Binds 1 Fe(2+) ion per subunit.</text>
</comment>
<comment type="similarity">
    <text evidence="2">Belongs to the carotenoid oxygenase family.</text>
</comment>
<accession>Q8LP17</accession>
<dbReference type="EC" id="1.14.99.n4"/>
<dbReference type="EMBL" id="AB080191">
    <property type="protein sequence ID" value="BAC10549.1"/>
    <property type="molecule type" value="mRNA"/>
</dbReference>
<dbReference type="SMR" id="Q8LP17"/>
<dbReference type="GO" id="GO:0009570">
    <property type="term" value="C:chloroplast stroma"/>
    <property type="evidence" value="ECO:0007669"/>
    <property type="project" value="TreeGrafter"/>
</dbReference>
<dbReference type="GO" id="GO:0010436">
    <property type="term" value="F:carotenoid dioxygenase activity"/>
    <property type="evidence" value="ECO:0007669"/>
    <property type="project" value="TreeGrafter"/>
</dbReference>
<dbReference type="GO" id="GO:0046872">
    <property type="term" value="F:metal ion binding"/>
    <property type="evidence" value="ECO:0007669"/>
    <property type="project" value="UniProtKB-KW"/>
</dbReference>
<dbReference type="GO" id="GO:0016121">
    <property type="term" value="P:carotene catabolic process"/>
    <property type="evidence" value="ECO:0007669"/>
    <property type="project" value="TreeGrafter"/>
</dbReference>
<dbReference type="InterPro" id="IPR004294">
    <property type="entry name" value="Carotenoid_Oase"/>
</dbReference>
<dbReference type="PANTHER" id="PTHR10543">
    <property type="entry name" value="BETA-CAROTENE DIOXYGENASE"/>
    <property type="match status" value="1"/>
</dbReference>
<dbReference type="PANTHER" id="PTHR10543:SF89">
    <property type="entry name" value="CAROTENOID 9,10(9',10')-CLEAVAGE DIOXYGENASE 1"/>
    <property type="match status" value="1"/>
</dbReference>
<dbReference type="Pfam" id="PF03055">
    <property type="entry name" value="RPE65"/>
    <property type="match status" value="1"/>
</dbReference>
<evidence type="ECO:0000250" key="1"/>
<evidence type="ECO:0000305" key="2"/>
<name>CCD1_PEA</name>
<proteinExistence type="evidence at transcript level"/>
<organism>
    <name type="scientific">Pisum sativum</name>
    <name type="common">Garden pea</name>
    <name type="synonym">Lathyrus oleraceus</name>
    <dbReference type="NCBI Taxonomy" id="3888"/>
    <lineage>
        <taxon>Eukaryota</taxon>
        <taxon>Viridiplantae</taxon>
        <taxon>Streptophyta</taxon>
        <taxon>Embryophyta</taxon>
        <taxon>Tracheophyta</taxon>
        <taxon>Spermatophyta</taxon>
        <taxon>Magnoliopsida</taxon>
        <taxon>eudicotyledons</taxon>
        <taxon>Gunneridae</taxon>
        <taxon>Pentapetalae</taxon>
        <taxon>rosids</taxon>
        <taxon>fabids</taxon>
        <taxon>Fabales</taxon>
        <taxon>Fabaceae</taxon>
        <taxon>Papilionoideae</taxon>
        <taxon>50 kb inversion clade</taxon>
        <taxon>NPAAA clade</taxon>
        <taxon>Hologalegina</taxon>
        <taxon>IRL clade</taxon>
        <taxon>Fabeae</taxon>
        <taxon>Pisum</taxon>
    </lineage>
</organism>
<reference key="1">
    <citation type="submission" date="2002-02" db="EMBL/GenBank/DDBJ databases">
        <title>Isolation and characterization of a cDNA encoding a nine-cis-epoxycarotenoid dioxygenase 1 (PsNCED1) from Pisum sativum.</title>
        <authorList>
            <person name="Nakako A."/>
            <person name="Mori H."/>
        </authorList>
    </citation>
    <scope>NUCLEOTIDE SEQUENCE [MRNA]</scope>
    <source>
        <strain>cv. Alaska</strain>
        <tissue>Axillary bud</tissue>
    </source>
</reference>
<sequence length="541" mass="61226">MGSEKKENGVILEVEPKPSNGFTSKAVDLLEKIIVKLFYDSSLPHHWLSGNFAPVKDETPPVKDLTVQGHLPDCLNGEFVRVGPNPKFSPVAGYHWFDGDGMIHGLRIKDGKASYVSRFVKTSRFKQEEYFNGSKFMKIGDLKGLFGLLMVNMQMLRAKLKILDVSYGHGTANTALVYHHQKLLALSEGDKPYAIKVFEDGDLQTLGMLDYDKRLGHNFTAHPKVDPFTGEMFTFGYSHTAPYVTYRVISKDGFMQDPVPITISDPVMMHDFAITENYSIFMDLPLYFRPKEMVKNKTLIFSFDSTKKARFGVLPRYAKDDKHIRWFELPNCFIFHNANAWEEEDEIVLITCRLENPNLDVVGGAVKEKLDNFSNELYEMRFNMKTGEASQKKLSASTVDFPRVNESYTGRKQRYVYGTTLDSIAKVTGIIKFDLHAEPDSGKTKLEVGGNVQGLYDLGPGRFGSEAVYVPRVPGTDSEEDDGYLIFFVHDENTGKSFVHVIDAKRMSAEPVAVVELPQRVPYGFHAFFVTEDQLQEQAKF</sequence>
<keyword id="KW-0223">Dioxygenase</keyword>
<keyword id="KW-0408">Iron</keyword>
<keyword id="KW-0479">Metal-binding</keyword>
<keyword id="KW-0560">Oxidoreductase</keyword>
<protein>
    <recommendedName>
        <fullName>Carotenoid 9,10(9',10')-cleavage dioxygenase 1</fullName>
        <ecNumber>1.14.99.n4</ecNumber>
    </recommendedName>
    <alternativeName>
        <fullName>PsCCD1</fullName>
    </alternativeName>
    <alternativeName>
        <fullName>PsNCED1</fullName>
    </alternativeName>
</protein>
<feature type="chain" id="PRO_0000285989" description="Carotenoid 9,10(9',10')-cleavage dioxygenase 1">
    <location>
        <begin position="1"/>
        <end position="541"/>
    </location>
</feature>
<feature type="binding site" evidence="1">
    <location>
        <position position="222"/>
    </location>
    <ligand>
        <name>Fe cation</name>
        <dbReference type="ChEBI" id="CHEBI:24875"/>
        <note>catalytic</note>
    </ligand>
</feature>
<feature type="binding site" evidence="1">
    <location>
        <position position="270"/>
    </location>
    <ligand>
        <name>Fe cation</name>
        <dbReference type="ChEBI" id="CHEBI:24875"/>
        <note>catalytic</note>
    </ligand>
</feature>
<feature type="binding site" evidence="1">
    <location>
        <position position="336"/>
    </location>
    <ligand>
        <name>Fe cation</name>
        <dbReference type="ChEBI" id="CHEBI:24875"/>
        <note>catalytic</note>
    </ligand>
</feature>
<feature type="binding site" evidence="1">
    <location>
        <position position="526"/>
    </location>
    <ligand>
        <name>Fe cation</name>
        <dbReference type="ChEBI" id="CHEBI:24875"/>
        <note>catalytic</note>
    </ligand>
</feature>
<gene>
    <name type="primary">CCD1</name>
    <name type="synonym">NCED1</name>
</gene>